<comment type="function">
    <text evidence="1 2 4">Metallothioneins have a high content of cysteine residues that bind various heavy metals (Probable). Functions as a metal chelator of copper (Cu) and zinc (Zn). Functions cooperatively with the phytochelatin synthase PCS1 to protect plants from Cu and cadmium toxicity (PubMed:18287486). Plays a role in Cu homeostasis, specifically in the remobilization of Cu from senescing leaves. The mobilization of Cu from internal sources is important for seed development (PubMed:24635746).</text>
</comment>
<comment type="tissue specificity">
    <text evidence="3">Expressed in vascular tissues of all organs. Expressed in root and leaf phloem, pollen and root hairs.</text>
</comment>
<comment type="similarity">
    <text evidence="4">Belongs to the metallothionein superfamily. Type 15 family.</text>
</comment>
<sequence>MSCCGGSCGCGSACKCGNGCGGCKRYPDLENTATETLVLGVAPAMNSQYEASGETFVAENDACKCGSDCKCNPCTCK</sequence>
<reference key="1">
    <citation type="journal article" date="1995" name="Mol. Gen. Genet.">
        <title>Structure, organization and expression of the metallothionein gene family in Arabidopsis.</title>
        <authorList>
            <person name="Zhou J."/>
            <person name="Goldsbrough P.B."/>
        </authorList>
    </citation>
    <scope>NUCLEOTIDE SEQUENCE [GENOMIC DNA]</scope>
    <source>
        <strain>cv. Columbia</strain>
    </source>
</reference>
<reference key="2">
    <citation type="journal article" date="2000" name="Nature">
        <title>Sequence and analysis of chromosome 5 of the plant Arabidopsis thaliana.</title>
        <authorList>
            <person name="Tabata S."/>
            <person name="Kaneko T."/>
            <person name="Nakamura Y."/>
            <person name="Kotani H."/>
            <person name="Kato T."/>
            <person name="Asamizu E."/>
            <person name="Miyajima N."/>
            <person name="Sasamoto S."/>
            <person name="Kimura T."/>
            <person name="Hosouchi T."/>
            <person name="Kawashima K."/>
            <person name="Kohara M."/>
            <person name="Matsumoto M."/>
            <person name="Matsuno A."/>
            <person name="Muraki A."/>
            <person name="Nakayama S."/>
            <person name="Nakazaki N."/>
            <person name="Naruo K."/>
            <person name="Okumura S."/>
            <person name="Shinpo S."/>
            <person name="Takeuchi C."/>
            <person name="Wada T."/>
            <person name="Watanabe A."/>
            <person name="Yamada M."/>
            <person name="Yasuda M."/>
            <person name="Sato S."/>
            <person name="de la Bastide M."/>
            <person name="Huang E."/>
            <person name="Spiegel L."/>
            <person name="Gnoj L."/>
            <person name="O'Shaughnessy A."/>
            <person name="Preston R."/>
            <person name="Habermann K."/>
            <person name="Murray J."/>
            <person name="Johnson D."/>
            <person name="Rohlfing T."/>
            <person name="Nelson J."/>
            <person name="Stoneking T."/>
            <person name="Pepin K."/>
            <person name="Spieth J."/>
            <person name="Sekhon M."/>
            <person name="Armstrong J."/>
            <person name="Becker M."/>
            <person name="Belter E."/>
            <person name="Cordum H."/>
            <person name="Cordes M."/>
            <person name="Courtney L."/>
            <person name="Courtney W."/>
            <person name="Dante M."/>
            <person name="Du H."/>
            <person name="Edwards J."/>
            <person name="Fryman J."/>
            <person name="Haakensen B."/>
            <person name="Lamar E."/>
            <person name="Latreille P."/>
            <person name="Leonard S."/>
            <person name="Meyer R."/>
            <person name="Mulvaney E."/>
            <person name="Ozersky P."/>
            <person name="Riley A."/>
            <person name="Strowmatt C."/>
            <person name="Wagner-McPherson C."/>
            <person name="Wollam A."/>
            <person name="Yoakum M."/>
            <person name="Bell M."/>
            <person name="Dedhia N."/>
            <person name="Parnell L."/>
            <person name="Shah R."/>
            <person name="Rodriguez M."/>
            <person name="Hoon See L."/>
            <person name="Vil D."/>
            <person name="Baker J."/>
            <person name="Kirchoff K."/>
            <person name="Toth K."/>
            <person name="King L."/>
            <person name="Bahret A."/>
            <person name="Miller B."/>
            <person name="Marra M.A."/>
            <person name="Martienssen R."/>
            <person name="McCombie W.R."/>
            <person name="Wilson R.K."/>
            <person name="Murphy G."/>
            <person name="Bancroft I."/>
            <person name="Volckaert G."/>
            <person name="Wambutt R."/>
            <person name="Duesterhoeft A."/>
            <person name="Stiekema W."/>
            <person name="Pohl T."/>
            <person name="Entian K.-D."/>
            <person name="Terryn N."/>
            <person name="Hartley N."/>
            <person name="Bent E."/>
            <person name="Johnson S."/>
            <person name="Langham S.-A."/>
            <person name="McCullagh B."/>
            <person name="Robben J."/>
            <person name="Grymonprez B."/>
            <person name="Zimmermann W."/>
            <person name="Ramsperger U."/>
            <person name="Wedler H."/>
            <person name="Balke K."/>
            <person name="Wedler E."/>
            <person name="Peters S."/>
            <person name="van Staveren M."/>
            <person name="Dirkse W."/>
            <person name="Mooijman P."/>
            <person name="Klein Lankhorst R."/>
            <person name="Weitzenegger T."/>
            <person name="Bothe G."/>
            <person name="Rose M."/>
            <person name="Hauf J."/>
            <person name="Berneiser S."/>
            <person name="Hempel S."/>
            <person name="Feldpausch M."/>
            <person name="Lamberth S."/>
            <person name="Villarroel R."/>
            <person name="Gielen J."/>
            <person name="Ardiles W."/>
            <person name="Bents O."/>
            <person name="Lemcke K."/>
            <person name="Kolesov G."/>
            <person name="Mayer K.F.X."/>
            <person name="Rudd S."/>
            <person name="Schoof H."/>
            <person name="Schueller C."/>
            <person name="Zaccaria P."/>
            <person name="Mewes H.-W."/>
            <person name="Bevan M."/>
            <person name="Fransz P.F."/>
        </authorList>
    </citation>
    <scope>NUCLEOTIDE SEQUENCE [LARGE SCALE GENOMIC DNA]</scope>
    <source>
        <strain>cv. Columbia</strain>
    </source>
</reference>
<reference key="3">
    <citation type="journal article" date="2017" name="Plant J.">
        <title>Araport11: a complete reannotation of the Arabidopsis thaliana reference genome.</title>
        <authorList>
            <person name="Cheng C.Y."/>
            <person name="Krishnakumar V."/>
            <person name="Chan A.P."/>
            <person name="Thibaud-Nissen F."/>
            <person name="Schobel S."/>
            <person name="Town C.D."/>
        </authorList>
    </citation>
    <scope>GENOME REANNOTATION</scope>
    <source>
        <strain>cv. Columbia</strain>
    </source>
</reference>
<reference key="4">
    <citation type="journal article" date="2003" name="Science">
        <title>Empirical analysis of transcriptional activity in the Arabidopsis genome.</title>
        <authorList>
            <person name="Yamada K."/>
            <person name="Lim J."/>
            <person name="Dale J.M."/>
            <person name="Chen H."/>
            <person name="Shinn P."/>
            <person name="Palm C.J."/>
            <person name="Southwick A.M."/>
            <person name="Wu H.C."/>
            <person name="Kim C.J."/>
            <person name="Nguyen M."/>
            <person name="Pham P.K."/>
            <person name="Cheuk R.F."/>
            <person name="Karlin-Newmann G."/>
            <person name="Liu S.X."/>
            <person name="Lam B."/>
            <person name="Sakano H."/>
            <person name="Wu T."/>
            <person name="Yu G."/>
            <person name="Miranda M."/>
            <person name="Quach H.L."/>
            <person name="Tripp M."/>
            <person name="Chang C.H."/>
            <person name="Lee J.M."/>
            <person name="Toriumi M.J."/>
            <person name="Chan M.M."/>
            <person name="Tang C.C."/>
            <person name="Onodera C.S."/>
            <person name="Deng J.M."/>
            <person name="Akiyama K."/>
            <person name="Ansari Y."/>
            <person name="Arakawa T."/>
            <person name="Banh J."/>
            <person name="Banno F."/>
            <person name="Bowser L."/>
            <person name="Brooks S.Y."/>
            <person name="Carninci P."/>
            <person name="Chao Q."/>
            <person name="Choy N."/>
            <person name="Enju A."/>
            <person name="Goldsmith A.D."/>
            <person name="Gurjal M."/>
            <person name="Hansen N.F."/>
            <person name="Hayashizaki Y."/>
            <person name="Johnson-Hopson C."/>
            <person name="Hsuan V.W."/>
            <person name="Iida K."/>
            <person name="Karnes M."/>
            <person name="Khan S."/>
            <person name="Koesema E."/>
            <person name="Ishida J."/>
            <person name="Jiang P.X."/>
            <person name="Jones T."/>
            <person name="Kawai J."/>
            <person name="Kamiya A."/>
            <person name="Meyers C."/>
            <person name="Nakajima M."/>
            <person name="Narusaka M."/>
            <person name="Seki M."/>
            <person name="Sakurai T."/>
            <person name="Satou M."/>
            <person name="Tamse R."/>
            <person name="Vaysberg M."/>
            <person name="Wallender E.K."/>
            <person name="Wong C."/>
            <person name="Yamamura Y."/>
            <person name="Yuan S."/>
            <person name="Shinozaki K."/>
            <person name="Davis R.W."/>
            <person name="Theologis A."/>
            <person name="Ecker J.R."/>
        </authorList>
    </citation>
    <scope>NUCLEOTIDE SEQUENCE [LARGE SCALE MRNA]</scope>
    <source>
        <strain>cv. Columbia</strain>
    </source>
</reference>
<reference key="5">
    <citation type="submission" date="2006-07" db="EMBL/GenBank/DDBJ databases">
        <title>Large-scale analysis of RIKEN Arabidopsis full-length (RAFL) cDNAs.</title>
        <authorList>
            <person name="Totoki Y."/>
            <person name="Seki M."/>
            <person name="Ishida J."/>
            <person name="Nakajima M."/>
            <person name="Enju A."/>
            <person name="Kamiya A."/>
            <person name="Narusaka M."/>
            <person name="Shin-i T."/>
            <person name="Nakagawa M."/>
            <person name="Sakamoto N."/>
            <person name="Oishi K."/>
            <person name="Kohara Y."/>
            <person name="Kobayashi M."/>
            <person name="Toyoda A."/>
            <person name="Sakaki Y."/>
            <person name="Sakurai T."/>
            <person name="Iida K."/>
            <person name="Akiyama K."/>
            <person name="Satou M."/>
            <person name="Toyoda T."/>
            <person name="Konagaya A."/>
            <person name="Carninci P."/>
            <person name="Kawai J."/>
            <person name="Hayashizaki Y."/>
            <person name="Shinozaki K."/>
        </authorList>
    </citation>
    <scope>NUCLEOTIDE SEQUENCE [LARGE SCALE MRNA]</scope>
    <source>
        <strain>cv. Columbia</strain>
    </source>
</reference>
<reference key="6">
    <citation type="submission" date="2002-03" db="EMBL/GenBank/DDBJ databases">
        <title>Full-length cDNA from Arabidopsis thaliana.</title>
        <authorList>
            <person name="Brover V.V."/>
            <person name="Troukhan M.E."/>
            <person name="Alexandrov N.A."/>
            <person name="Lu Y.-P."/>
            <person name="Flavell R.B."/>
            <person name="Feldmann K.A."/>
        </authorList>
    </citation>
    <scope>NUCLEOTIDE SEQUENCE [LARGE SCALE MRNA]</scope>
</reference>
<reference key="7">
    <citation type="journal article" date="2003" name="New Phytol.">
        <title>Characterization of the Arabidopsis metallothionein gene family: tissue-specific expression and induction during senescence and in response to copper.</title>
        <authorList>
            <person name="Guo W.J."/>
            <person name="Bundithya W."/>
            <person name="Goldsbrough P.B."/>
        </authorList>
    </citation>
    <scope>TISSUE SPECIFICITY</scope>
</reference>
<reference key="8">
    <citation type="journal article" date="2008" name="Plant Physiol.">
        <title>Examining the specific contributions of individual Arabidopsis metallothioneins to copper distribution and metal tolerance.</title>
        <authorList>
            <person name="Guo W.J."/>
            <person name="Meetam M."/>
            <person name="Goldsbrough P.B."/>
        </authorList>
    </citation>
    <scope>FUNCTION</scope>
</reference>
<reference key="9">
    <citation type="journal article" date="2014" name="New Phytol.">
        <title>Metallothionein deficiency impacts copper accumulation and redistribution in leaves and seeds of Arabidopsis.</title>
        <authorList>
            <person name="Benatti M.R."/>
            <person name="Yookongkaew N."/>
            <person name="Meetam M."/>
            <person name="Guo W.J."/>
            <person name="Punyasuk N."/>
            <person name="Abuqamar S."/>
            <person name="Goldsbrough P."/>
        </authorList>
    </citation>
    <scope>FUNCTION</scope>
</reference>
<organism>
    <name type="scientific">Arabidopsis thaliana</name>
    <name type="common">Mouse-ear cress</name>
    <dbReference type="NCBI Taxonomy" id="3702"/>
    <lineage>
        <taxon>Eukaryota</taxon>
        <taxon>Viridiplantae</taxon>
        <taxon>Streptophyta</taxon>
        <taxon>Embryophyta</taxon>
        <taxon>Tracheophyta</taxon>
        <taxon>Spermatophyta</taxon>
        <taxon>Magnoliopsida</taxon>
        <taxon>eudicotyledons</taxon>
        <taxon>Gunneridae</taxon>
        <taxon>Pentapetalae</taxon>
        <taxon>rosids</taxon>
        <taxon>malvids</taxon>
        <taxon>Brassicales</taxon>
        <taxon>Brassicaceae</taxon>
        <taxon>Camelineae</taxon>
        <taxon>Arabidopsis</taxon>
    </lineage>
</organism>
<dbReference type="EMBL" id="U11256">
    <property type="protein sequence ID" value="AAA82212.1"/>
    <property type="molecule type" value="Genomic_DNA"/>
</dbReference>
<dbReference type="EMBL" id="AL162874">
    <property type="protein sequence ID" value="CAB85543.1"/>
    <property type="molecule type" value="Genomic_DNA"/>
</dbReference>
<dbReference type="EMBL" id="CP002688">
    <property type="protein sequence ID" value="AED90465.1"/>
    <property type="molecule type" value="Genomic_DNA"/>
</dbReference>
<dbReference type="EMBL" id="AF324665">
    <property type="protein sequence ID" value="AAG40016.1"/>
    <property type="molecule type" value="mRNA"/>
</dbReference>
<dbReference type="EMBL" id="AF339712">
    <property type="protein sequence ID" value="AAK00394.1"/>
    <property type="molecule type" value="mRNA"/>
</dbReference>
<dbReference type="EMBL" id="BT004570">
    <property type="protein sequence ID" value="AAO42816.1"/>
    <property type="molecule type" value="mRNA"/>
</dbReference>
<dbReference type="EMBL" id="AK227568">
    <property type="protein sequence ID" value="BAE99562.1"/>
    <property type="molecule type" value="mRNA"/>
</dbReference>
<dbReference type="EMBL" id="AY085738">
    <property type="protein sequence ID" value="AAM62956.1"/>
    <property type="molecule type" value="mRNA"/>
</dbReference>
<dbReference type="PIR" id="S57862">
    <property type="entry name" value="S57862"/>
</dbReference>
<dbReference type="RefSeq" id="NP_195858.1">
    <property type="nucleotide sequence ID" value="NM_120316.2"/>
</dbReference>
<dbReference type="FunCoup" id="Q38805">
    <property type="interactions" value="470"/>
</dbReference>
<dbReference type="STRING" id="3702.Q38805"/>
<dbReference type="PaxDb" id="3702-AT5G02380.1"/>
<dbReference type="EnsemblPlants" id="AT5G02380.1">
    <property type="protein sequence ID" value="AT5G02380.1"/>
    <property type="gene ID" value="AT5G02380"/>
</dbReference>
<dbReference type="GeneID" id="831816"/>
<dbReference type="Gramene" id="AT5G02380.1">
    <property type="protein sequence ID" value="AT5G02380.1"/>
    <property type="gene ID" value="AT5G02380"/>
</dbReference>
<dbReference type="KEGG" id="ath:AT5G02380"/>
<dbReference type="Araport" id="AT5G02380"/>
<dbReference type="TAIR" id="AT5G02380">
    <property type="gene designation" value="MT2B"/>
</dbReference>
<dbReference type="eggNOG" id="KOG4738">
    <property type="taxonomic scope" value="Eukaryota"/>
</dbReference>
<dbReference type="HOGENOM" id="CLU_161105_1_0_1"/>
<dbReference type="InParanoid" id="Q38805"/>
<dbReference type="OMA" id="GCKRYPD"/>
<dbReference type="PhylomeDB" id="Q38805"/>
<dbReference type="PRO" id="PR:Q38805"/>
<dbReference type="Proteomes" id="UP000006548">
    <property type="component" value="Chromosome 5"/>
</dbReference>
<dbReference type="ExpressionAtlas" id="Q38805">
    <property type="expression patterns" value="baseline and differential"/>
</dbReference>
<dbReference type="GO" id="GO:0005507">
    <property type="term" value="F:copper ion binding"/>
    <property type="evidence" value="ECO:0000314"/>
    <property type="project" value="TAIR"/>
</dbReference>
<dbReference type="InterPro" id="IPR000347">
    <property type="entry name" value="Metalthion_15p"/>
</dbReference>
<dbReference type="PANTHER" id="PTHR33543">
    <property type="entry name" value="METALLOTHIONEIN-LIKE PROTEIN 2A"/>
    <property type="match status" value="1"/>
</dbReference>
<dbReference type="PANTHER" id="PTHR33543:SF33">
    <property type="entry name" value="METALLOTHIONEIN-LIKE PROTEIN 2B"/>
    <property type="match status" value="1"/>
</dbReference>
<dbReference type="Pfam" id="PF01439">
    <property type="entry name" value="Metallothio_2"/>
    <property type="match status" value="1"/>
</dbReference>
<protein>
    <recommendedName>
        <fullName>Metallothionein-like protein 2B</fullName>
        <shortName>MT-2B</shortName>
    </recommendedName>
</protein>
<proteinExistence type="evidence at transcript level"/>
<keyword id="KW-0479">Metal-binding</keyword>
<keyword id="KW-0480">Metal-thiolate cluster</keyword>
<keyword id="KW-1185">Reference proteome</keyword>
<name>MT2B_ARATH</name>
<evidence type="ECO:0000269" key="1">
    <source>
    </source>
</evidence>
<evidence type="ECO:0000269" key="2">
    <source>
    </source>
</evidence>
<evidence type="ECO:0000269" key="3">
    <source ref="7"/>
</evidence>
<evidence type="ECO:0000305" key="4"/>
<gene>
    <name type="primary">MT2B</name>
    <name type="ordered locus">At5g02380</name>
    <name type="ORF">T1E22_140</name>
</gene>
<accession>Q38805</accession>
<accession>Q0WTI6</accession>
<accession>Q8LDX5</accession>
<feature type="chain" id="PRO_0000197387" description="Metallothionein-like protein 2B">
    <location>
        <begin position="1"/>
        <end position="77"/>
    </location>
</feature>
<feature type="sequence conflict" description="In Ref. 6; AAM62956." evidence="4" ref="6">
    <original>P</original>
    <variation>S</variation>
    <location>
        <position position="27"/>
    </location>
</feature>